<protein>
    <recommendedName>
        <fullName evidence="1">Beta-ketoacyl-[acyl-carrier-protein] synthase III</fullName>
        <shortName evidence="1">Beta-ketoacyl-ACP synthase III</shortName>
        <shortName evidence="1">KAS III</shortName>
        <ecNumber evidence="1">2.3.1.180</ecNumber>
    </recommendedName>
    <alternativeName>
        <fullName evidence="1">3-oxoacyl-[acyl-carrier-protein] synthase 3</fullName>
    </alternativeName>
    <alternativeName>
        <fullName evidence="1">3-oxoacyl-[acyl-carrier-protein] synthase III</fullName>
    </alternativeName>
</protein>
<reference key="1">
    <citation type="journal article" date="2002" name="Nat. Biotechnol.">
        <title>Genome sequence of the dissimilatory metal ion-reducing bacterium Shewanella oneidensis.</title>
        <authorList>
            <person name="Heidelberg J.F."/>
            <person name="Paulsen I.T."/>
            <person name="Nelson K.E."/>
            <person name="Gaidos E.J."/>
            <person name="Nelson W.C."/>
            <person name="Read T.D."/>
            <person name="Eisen J.A."/>
            <person name="Seshadri R."/>
            <person name="Ward N.L."/>
            <person name="Methe B.A."/>
            <person name="Clayton R.A."/>
            <person name="Meyer T."/>
            <person name="Tsapin A."/>
            <person name="Scott J."/>
            <person name="Beanan M.J."/>
            <person name="Brinkac L.M."/>
            <person name="Daugherty S.C."/>
            <person name="DeBoy R.T."/>
            <person name="Dodson R.J."/>
            <person name="Durkin A.S."/>
            <person name="Haft D.H."/>
            <person name="Kolonay J.F."/>
            <person name="Madupu R."/>
            <person name="Peterson J.D."/>
            <person name="Umayam L.A."/>
            <person name="White O."/>
            <person name="Wolf A.M."/>
            <person name="Vamathevan J.J."/>
            <person name="Weidman J.F."/>
            <person name="Impraim M."/>
            <person name="Lee K."/>
            <person name="Berry K.J."/>
            <person name="Lee C."/>
            <person name="Mueller J."/>
            <person name="Khouri H.M."/>
            <person name="Gill J."/>
            <person name="Utterback T.R."/>
            <person name="McDonald L.A."/>
            <person name="Feldblyum T.V."/>
            <person name="Smith H.O."/>
            <person name="Venter J.C."/>
            <person name="Nealson K.H."/>
            <person name="Fraser C.M."/>
        </authorList>
    </citation>
    <scope>NUCLEOTIDE SEQUENCE [LARGE SCALE GENOMIC DNA]</scope>
    <source>
        <strain>ATCC 700550 / JCM 31522 / CIP 106686 / LMG 19005 / NCIMB 14063 / MR-1</strain>
    </source>
</reference>
<organism>
    <name type="scientific">Shewanella oneidensis (strain ATCC 700550 / JCM 31522 / CIP 106686 / LMG 19005 / NCIMB 14063 / MR-1)</name>
    <dbReference type="NCBI Taxonomy" id="211586"/>
    <lineage>
        <taxon>Bacteria</taxon>
        <taxon>Pseudomonadati</taxon>
        <taxon>Pseudomonadota</taxon>
        <taxon>Gammaproteobacteria</taxon>
        <taxon>Alteromonadales</taxon>
        <taxon>Shewanellaceae</taxon>
        <taxon>Shewanella</taxon>
    </lineage>
</organism>
<sequence>MHTKILGTGSYVPVQVRSNQDLEKMVETSDQWIVERTGISERRIAAQDETVSTMGYLAALNALEMAGIEASDLDMIICGTTSAANAFPAAACEIQAMLGVHTIPAFDIAAACSGFVYALSVADQFVKNGTAKKVLVIGADVLSRLCEPEDRTTIILFGDGAGAAIIGASDEPGIISTHIYADGRQGDLLKCAFPPRQGETSEAVGFMTMKGNDVFKVAVTQLSHVVTETLRLNNIDKSEIDWLVPHQANFRIINATAKKLDMSLDKVVLTLAKHGNTSAASVPIALDEAVRDGRIQRGQLLLLEAFGAGFAWGSALVRF</sequence>
<dbReference type="EC" id="2.3.1.180" evidence="1"/>
<dbReference type="EMBL" id="AE014299">
    <property type="protein sequence ID" value="AAN55803.1"/>
    <property type="molecule type" value="Genomic_DNA"/>
</dbReference>
<dbReference type="RefSeq" id="NP_718359.1">
    <property type="nucleotide sequence ID" value="NC_004347.2"/>
</dbReference>
<dbReference type="RefSeq" id="WP_011072713.1">
    <property type="nucleotide sequence ID" value="NC_004347.2"/>
</dbReference>
<dbReference type="SMR" id="Q8EDH1"/>
<dbReference type="STRING" id="211586.SO_2778"/>
<dbReference type="PaxDb" id="211586-SO_2778"/>
<dbReference type="KEGG" id="son:SO_2778"/>
<dbReference type="PATRIC" id="fig|211586.12.peg.2678"/>
<dbReference type="eggNOG" id="COG0332">
    <property type="taxonomic scope" value="Bacteria"/>
</dbReference>
<dbReference type="HOGENOM" id="CLU_039592_4_1_6"/>
<dbReference type="OrthoDB" id="9815506at2"/>
<dbReference type="PhylomeDB" id="Q8EDH1"/>
<dbReference type="BioCyc" id="SONE211586:G1GMP-2564-MONOMER"/>
<dbReference type="UniPathway" id="UPA00094"/>
<dbReference type="Proteomes" id="UP000008186">
    <property type="component" value="Chromosome"/>
</dbReference>
<dbReference type="GO" id="GO:0005737">
    <property type="term" value="C:cytoplasm"/>
    <property type="evidence" value="ECO:0007669"/>
    <property type="project" value="UniProtKB-SubCell"/>
</dbReference>
<dbReference type="GO" id="GO:0004315">
    <property type="term" value="F:3-oxoacyl-[acyl-carrier-protein] synthase activity"/>
    <property type="evidence" value="ECO:0007669"/>
    <property type="project" value="InterPro"/>
</dbReference>
<dbReference type="GO" id="GO:0033818">
    <property type="term" value="F:beta-ketoacyl-acyl-carrier-protein synthase III activity"/>
    <property type="evidence" value="ECO:0007669"/>
    <property type="project" value="UniProtKB-UniRule"/>
</dbReference>
<dbReference type="GO" id="GO:0006633">
    <property type="term" value="P:fatty acid biosynthetic process"/>
    <property type="evidence" value="ECO:0007669"/>
    <property type="project" value="UniProtKB-UniRule"/>
</dbReference>
<dbReference type="CDD" id="cd00830">
    <property type="entry name" value="KAS_III"/>
    <property type="match status" value="1"/>
</dbReference>
<dbReference type="FunFam" id="3.40.47.10:FF:000004">
    <property type="entry name" value="3-oxoacyl-[acyl-carrier-protein] synthase 3"/>
    <property type="match status" value="1"/>
</dbReference>
<dbReference type="Gene3D" id="3.40.47.10">
    <property type="match status" value="1"/>
</dbReference>
<dbReference type="HAMAP" id="MF_01815">
    <property type="entry name" value="FabH"/>
    <property type="match status" value="1"/>
</dbReference>
<dbReference type="InterPro" id="IPR013747">
    <property type="entry name" value="ACP_syn_III_C"/>
</dbReference>
<dbReference type="InterPro" id="IPR013751">
    <property type="entry name" value="ACP_syn_III_N"/>
</dbReference>
<dbReference type="InterPro" id="IPR004655">
    <property type="entry name" value="FabH"/>
</dbReference>
<dbReference type="InterPro" id="IPR016039">
    <property type="entry name" value="Thiolase-like"/>
</dbReference>
<dbReference type="NCBIfam" id="TIGR00747">
    <property type="entry name" value="fabH"/>
    <property type="match status" value="1"/>
</dbReference>
<dbReference type="NCBIfam" id="NF006829">
    <property type="entry name" value="PRK09352.1"/>
    <property type="match status" value="1"/>
</dbReference>
<dbReference type="PANTHER" id="PTHR43091">
    <property type="entry name" value="3-OXOACYL-[ACYL-CARRIER-PROTEIN] SYNTHASE"/>
    <property type="match status" value="1"/>
</dbReference>
<dbReference type="PANTHER" id="PTHR43091:SF1">
    <property type="entry name" value="BETA-KETOACYL-[ACYL-CARRIER-PROTEIN] SYNTHASE III, CHLOROPLASTIC"/>
    <property type="match status" value="1"/>
</dbReference>
<dbReference type="Pfam" id="PF08545">
    <property type="entry name" value="ACP_syn_III"/>
    <property type="match status" value="1"/>
</dbReference>
<dbReference type="Pfam" id="PF08541">
    <property type="entry name" value="ACP_syn_III_C"/>
    <property type="match status" value="1"/>
</dbReference>
<dbReference type="SUPFAM" id="SSF53901">
    <property type="entry name" value="Thiolase-like"/>
    <property type="match status" value="1"/>
</dbReference>
<proteinExistence type="inferred from homology"/>
<keyword id="KW-0012">Acyltransferase</keyword>
<keyword id="KW-0963">Cytoplasm</keyword>
<keyword id="KW-0275">Fatty acid biosynthesis</keyword>
<keyword id="KW-0276">Fatty acid metabolism</keyword>
<keyword id="KW-0444">Lipid biosynthesis</keyword>
<keyword id="KW-0443">Lipid metabolism</keyword>
<keyword id="KW-0511">Multifunctional enzyme</keyword>
<keyword id="KW-1185">Reference proteome</keyword>
<keyword id="KW-0808">Transferase</keyword>
<feature type="chain" id="PRO_0000110466" description="Beta-ketoacyl-[acyl-carrier-protein] synthase III">
    <location>
        <begin position="1"/>
        <end position="319"/>
    </location>
</feature>
<feature type="region of interest" description="ACP-binding" evidence="1">
    <location>
        <begin position="247"/>
        <end position="251"/>
    </location>
</feature>
<feature type="active site" evidence="1">
    <location>
        <position position="112"/>
    </location>
</feature>
<feature type="active site" evidence="1">
    <location>
        <position position="246"/>
    </location>
</feature>
<feature type="active site" evidence="1">
    <location>
        <position position="276"/>
    </location>
</feature>
<comment type="function">
    <text evidence="1">Catalyzes the condensation reaction of fatty acid synthesis by the addition to an acyl acceptor of two carbons from malonyl-ACP. Catalyzes the first condensation reaction which initiates fatty acid synthesis and may therefore play a role in governing the total rate of fatty acid production. Possesses both acetoacetyl-ACP synthase and acetyl transacylase activities. Its substrate specificity determines the biosynthesis of branched-chain and/or straight-chain of fatty acids.</text>
</comment>
<comment type="catalytic activity">
    <reaction evidence="1">
        <text>malonyl-[ACP] + acetyl-CoA + H(+) = 3-oxobutanoyl-[ACP] + CO2 + CoA</text>
        <dbReference type="Rhea" id="RHEA:12080"/>
        <dbReference type="Rhea" id="RHEA-COMP:9623"/>
        <dbReference type="Rhea" id="RHEA-COMP:9625"/>
        <dbReference type="ChEBI" id="CHEBI:15378"/>
        <dbReference type="ChEBI" id="CHEBI:16526"/>
        <dbReference type="ChEBI" id="CHEBI:57287"/>
        <dbReference type="ChEBI" id="CHEBI:57288"/>
        <dbReference type="ChEBI" id="CHEBI:78449"/>
        <dbReference type="ChEBI" id="CHEBI:78450"/>
        <dbReference type="EC" id="2.3.1.180"/>
    </reaction>
</comment>
<comment type="pathway">
    <text evidence="1">Lipid metabolism; fatty acid biosynthesis.</text>
</comment>
<comment type="subunit">
    <text evidence="1">Homodimer.</text>
</comment>
<comment type="subcellular location">
    <subcellularLocation>
        <location evidence="1">Cytoplasm</location>
    </subcellularLocation>
</comment>
<comment type="domain">
    <text evidence="1">The last Arg residue of the ACP-binding site is essential for the weak association between ACP/AcpP and FabH.</text>
</comment>
<comment type="similarity">
    <text evidence="1">Belongs to the thiolase-like superfamily. FabH family.</text>
</comment>
<name>FABH_SHEON</name>
<evidence type="ECO:0000255" key="1">
    <source>
        <dbReference type="HAMAP-Rule" id="MF_01815"/>
    </source>
</evidence>
<accession>Q8EDH1</accession>
<gene>
    <name evidence="1" type="primary">fabH</name>
    <name type="ordered locus">SO_2778</name>
</gene>